<proteinExistence type="inferred from homology"/>
<gene>
    <name evidence="1" type="primary">metN</name>
    <name type="ordered locus">PBPRA2940</name>
</gene>
<protein>
    <recommendedName>
        <fullName evidence="1">Methionine import ATP-binding protein MetN</fullName>
        <ecNumber evidence="1">7.4.2.11</ecNumber>
    </recommendedName>
</protein>
<feature type="chain" id="PRO_0000270340" description="Methionine import ATP-binding protein MetN">
    <location>
        <begin position="1"/>
        <end position="344"/>
    </location>
</feature>
<feature type="domain" description="ABC transporter" evidence="1">
    <location>
        <begin position="2"/>
        <end position="241"/>
    </location>
</feature>
<feature type="binding site" evidence="1">
    <location>
        <begin position="38"/>
        <end position="45"/>
    </location>
    <ligand>
        <name>ATP</name>
        <dbReference type="ChEBI" id="CHEBI:30616"/>
    </ligand>
</feature>
<name>METN_PHOPR</name>
<keyword id="KW-0029">Amino-acid transport</keyword>
<keyword id="KW-0067">ATP-binding</keyword>
<keyword id="KW-0997">Cell inner membrane</keyword>
<keyword id="KW-1003">Cell membrane</keyword>
<keyword id="KW-0472">Membrane</keyword>
<keyword id="KW-0547">Nucleotide-binding</keyword>
<keyword id="KW-1185">Reference proteome</keyword>
<keyword id="KW-1278">Translocase</keyword>
<keyword id="KW-0813">Transport</keyword>
<comment type="function">
    <text evidence="1">Part of the ABC transporter complex MetNIQ involved in methionine import. Responsible for energy coupling to the transport system.</text>
</comment>
<comment type="catalytic activity">
    <reaction evidence="1">
        <text>L-methionine(out) + ATP + H2O = L-methionine(in) + ADP + phosphate + H(+)</text>
        <dbReference type="Rhea" id="RHEA:29779"/>
        <dbReference type="ChEBI" id="CHEBI:15377"/>
        <dbReference type="ChEBI" id="CHEBI:15378"/>
        <dbReference type="ChEBI" id="CHEBI:30616"/>
        <dbReference type="ChEBI" id="CHEBI:43474"/>
        <dbReference type="ChEBI" id="CHEBI:57844"/>
        <dbReference type="ChEBI" id="CHEBI:456216"/>
        <dbReference type="EC" id="7.4.2.11"/>
    </reaction>
</comment>
<comment type="catalytic activity">
    <reaction evidence="1">
        <text>D-methionine(out) + ATP + H2O = D-methionine(in) + ADP + phosphate + H(+)</text>
        <dbReference type="Rhea" id="RHEA:29767"/>
        <dbReference type="ChEBI" id="CHEBI:15377"/>
        <dbReference type="ChEBI" id="CHEBI:15378"/>
        <dbReference type="ChEBI" id="CHEBI:30616"/>
        <dbReference type="ChEBI" id="CHEBI:43474"/>
        <dbReference type="ChEBI" id="CHEBI:57932"/>
        <dbReference type="ChEBI" id="CHEBI:456216"/>
        <dbReference type="EC" id="7.4.2.11"/>
    </reaction>
</comment>
<comment type="subunit">
    <text evidence="1">The complex is composed of two ATP-binding proteins (MetN), two transmembrane proteins (MetI) and a solute-binding protein (MetQ).</text>
</comment>
<comment type="subcellular location">
    <subcellularLocation>
        <location evidence="1">Cell inner membrane</location>
        <topology evidence="1">Peripheral membrane protein</topology>
    </subcellularLocation>
</comment>
<comment type="similarity">
    <text evidence="1">Belongs to the ABC transporter superfamily. Methionine importer (TC 3.A.1.24) family.</text>
</comment>
<comment type="sequence caution" evidence="2">
    <conflict type="erroneous initiation">
        <sequence resource="EMBL-CDS" id="CAG21274"/>
    </conflict>
</comment>
<evidence type="ECO:0000255" key="1">
    <source>
        <dbReference type="HAMAP-Rule" id="MF_01719"/>
    </source>
</evidence>
<evidence type="ECO:0000305" key="2"/>
<sequence length="344" mass="37376">MIEINRVNKVFYQGERAINALSDINLTIEQGTIFGVIGSSGAGKSTLIRCVNLLERPTSGHIIVDGVDLTQLSNKELSLARRKIGMIFQHFNLLSSRTVFENVALPLELAGASNNAIKEKVDGLLKLVGLSDKNDTYPCNLSGGQKQRVAIARALASDPKVLLCDEATSALDPATTQSILDLLREINRELNLTILLITHEMDVVKGICSQVAIIGDGELVEKGPVGDIFAHPKTELARKFIRSTLDLSIPTDFQARMTPEKVTGSYPLIRLEFTGASVNAPLISQVAREFNIDISILSSDMDYIGGVKFGLMLAELFGTEQAAEQAIAFLRDHKVNVEVLGYVA</sequence>
<reference key="1">
    <citation type="journal article" date="2005" name="Science">
        <title>Life at depth: Photobacterium profundum genome sequence and expression analysis.</title>
        <authorList>
            <person name="Vezzi A."/>
            <person name="Campanaro S."/>
            <person name="D'Angelo M."/>
            <person name="Simonato F."/>
            <person name="Vitulo N."/>
            <person name="Lauro F.M."/>
            <person name="Cestaro A."/>
            <person name="Malacrida G."/>
            <person name="Simionati B."/>
            <person name="Cannata N."/>
            <person name="Romualdi C."/>
            <person name="Bartlett D.H."/>
            <person name="Valle G."/>
        </authorList>
    </citation>
    <scope>NUCLEOTIDE SEQUENCE [LARGE SCALE GENOMIC DNA]</scope>
    <source>
        <strain>ATCC BAA-1253 / SS9</strain>
    </source>
</reference>
<accession>Q6LN52</accession>
<organism>
    <name type="scientific">Photobacterium profundum (strain SS9)</name>
    <dbReference type="NCBI Taxonomy" id="298386"/>
    <lineage>
        <taxon>Bacteria</taxon>
        <taxon>Pseudomonadati</taxon>
        <taxon>Pseudomonadota</taxon>
        <taxon>Gammaproteobacteria</taxon>
        <taxon>Vibrionales</taxon>
        <taxon>Vibrionaceae</taxon>
        <taxon>Photobacterium</taxon>
    </lineage>
</organism>
<dbReference type="EC" id="7.4.2.11" evidence="1"/>
<dbReference type="EMBL" id="CR378672">
    <property type="protein sequence ID" value="CAG21274.1"/>
    <property type="status" value="ALT_INIT"/>
    <property type="molecule type" value="Genomic_DNA"/>
</dbReference>
<dbReference type="RefSeq" id="WP_011219542.1">
    <property type="nucleotide sequence ID" value="NC_006370.1"/>
</dbReference>
<dbReference type="SMR" id="Q6LN52"/>
<dbReference type="STRING" id="298386.PBPRA2940"/>
<dbReference type="KEGG" id="ppr:PBPRA2940"/>
<dbReference type="eggNOG" id="COG1135">
    <property type="taxonomic scope" value="Bacteria"/>
</dbReference>
<dbReference type="HOGENOM" id="CLU_000604_1_3_6"/>
<dbReference type="Proteomes" id="UP000000593">
    <property type="component" value="Chromosome 1"/>
</dbReference>
<dbReference type="GO" id="GO:0009276">
    <property type="term" value="C:Gram-negative-bacterium-type cell wall"/>
    <property type="evidence" value="ECO:0007669"/>
    <property type="project" value="InterPro"/>
</dbReference>
<dbReference type="GO" id="GO:0005886">
    <property type="term" value="C:plasma membrane"/>
    <property type="evidence" value="ECO:0007669"/>
    <property type="project" value="UniProtKB-SubCell"/>
</dbReference>
<dbReference type="GO" id="GO:0033232">
    <property type="term" value="F:ABC-type D-methionine transporter activity"/>
    <property type="evidence" value="ECO:0007669"/>
    <property type="project" value="UniProtKB-EC"/>
</dbReference>
<dbReference type="GO" id="GO:0005524">
    <property type="term" value="F:ATP binding"/>
    <property type="evidence" value="ECO:0007669"/>
    <property type="project" value="UniProtKB-KW"/>
</dbReference>
<dbReference type="GO" id="GO:0016887">
    <property type="term" value="F:ATP hydrolysis activity"/>
    <property type="evidence" value="ECO:0007669"/>
    <property type="project" value="InterPro"/>
</dbReference>
<dbReference type="CDD" id="cd03258">
    <property type="entry name" value="ABC_MetN_methionine_transporter"/>
    <property type="match status" value="1"/>
</dbReference>
<dbReference type="FunFam" id="3.40.50.300:FF:000233">
    <property type="entry name" value="Methionine import ATP-binding protein MetN"/>
    <property type="match status" value="1"/>
</dbReference>
<dbReference type="Gene3D" id="3.30.70.260">
    <property type="match status" value="1"/>
</dbReference>
<dbReference type="Gene3D" id="3.40.50.300">
    <property type="entry name" value="P-loop containing nucleotide triphosphate hydrolases"/>
    <property type="match status" value="1"/>
</dbReference>
<dbReference type="InterPro" id="IPR003593">
    <property type="entry name" value="AAA+_ATPase"/>
</dbReference>
<dbReference type="InterPro" id="IPR012692">
    <property type="entry name" value="ABC_MetN_proteobac"/>
</dbReference>
<dbReference type="InterPro" id="IPR003439">
    <property type="entry name" value="ABC_transporter-like_ATP-bd"/>
</dbReference>
<dbReference type="InterPro" id="IPR017871">
    <property type="entry name" value="ABC_transporter-like_CS"/>
</dbReference>
<dbReference type="InterPro" id="IPR045865">
    <property type="entry name" value="ACT-like_dom_sf"/>
</dbReference>
<dbReference type="InterPro" id="IPR041701">
    <property type="entry name" value="MetN_ABC"/>
</dbReference>
<dbReference type="InterPro" id="IPR050086">
    <property type="entry name" value="MetN_ABC_transporter-like"/>
</dbReference>
<dbReference type="InterPro" id="IPR018449">
    <property type="entry name" value="NIL_domain"/>
</dbReference>
<dbReference type="InterPro" id="IPR027417">
    <property type="entry name" value="P-loop_NTPase"/>
</dbReference>
<dbReference type="NCBIfam" id="TIGR02314">
    <property type="entry name" value="ABC_MetN"/>
    <property type="match status" value="1"/>
</dbReference>
<dbReference type="PANTHER" id="PTHR43166">
    <property type="entry name" value="AMINO ACID IMPORT ATP-BINDING PROTEIN"/>
    <property type="match status" value="1"/>
</dbReference>
<dbReference type="PANTHER" id="PTHR43166:SF30">
    <property type="entry name" value="METHIONINE IMPORT ATP-BINDING PROTEIN METN"/>
    <property type="match status" value="1"/>
</dbReference>
<dbReference type="Pfam" id="PF00005">
    <property type="entry name" value="ABC_tran"/>
    <property type="match status" value="1"/>
</dbReference>
<dbReference type="Pfam" id="PF09383">
    <property type="entry name" value="NIL"/>
    <property type="match status" value="1"/>
</dbReference>
<dbReference type="SMART" id="SM00382">
    <property type="entry name" value="AAA"/>
    <property type="match status" value="1"/>
</dbReference>
<dbReference type="SMART" id="SM00930">
    <property type="entry name" value="NIL"/>
    <property type="match status" value="1"/>
</dbReference>
<dbReference type="SUPFAM" id="SSF55021">
    <property type="entry name" value="ACT-like"/>
    <property type="match status" value="1"/>
</dbReference>
<dbReference type="SUPFAM" id="SSF52540">
    <property type="entry name" value="P-loop containing nucleoside triphosphate hydrolases"/>
    <property type="match status" value="1"/>
</dbReference>
<dbReference type="PROSITE" id="PS00211">
    <property type="entry name" value="ABC_TRANSPORTER_1"/>
    <property type="match status" value="1"/>
</dbReference>
<dbReference type="PROSITE" id="PS50893">
    <property type="entry name" value="ABC_TRANSPORTER_2"/>
    <property type="match status" value="1"/>
</dbReference>
<dbReference type="PROSITE" id="PS51264">
    <property type="entry name" value="METN"/>
    <property type="match status" value="1"/>
</dbReference>